<name>YFIA_ECO57</name>
<dbReference type="EMBL" id="AE005174">
    <property type="protein sequence ID" value="AAG57709.1"/>
    <property type="molecule type" value="Genomic_DNA"/>
</dbReference>
<dbReference type="EMBL" id="BA000007">
    <property type="protein sequence ID" value="BAB36883.1"/>
    <property type="molecule type" value="Genomic_DNA"/>
</dbReference>
<dbReference type="PIR" id="A85906">
    <property type="entry name" value="A85906"/>
</dbReference>
<dbReference type="PIR" id="D91061">
    <property type="entry name" value="D91061"/>
</dbReference>
<dbReference type="RefSeq" id="NP_311487.1">
    <property type="nucleotide sequence ID" value="NC_002695.1"/>
</dbReference>
<dbReference type="RefSeq" id="WP_000178456.1">
    <property type="nucleotide sequence ID" value="NZ_VOAI01000040.1"/>
</dbReference>
<dbReference type="BMRB" id="P0AD51"/>
<dbReference type="SMR" id="P0AD51"/>
<dbReference type="STRING" id="155864.Z3890"/>
<dbReference type="GeneID" id="914860"/>
<dbReference type="GeneID" id="93774443"/>
<dbReference type="KEGG" id="ece:Z3890"/>
<dbReference type="KEGG" id="ecs:ECs_3460"/>
<dbReference type="PATRIC" id="fig|386585.9.peg.3615"/>
<dbReference type="eggNOG" id="COG1544">
    <property type="taxonomic scope" value="Bacteria"/>
</dbReference>
<dbReference type="HOGENOM" id="CLU_071472_3_0_6"/>
<dbReference type="OMA" id="HEDMYVA"/>
<dbReference type="Proteomes" id="UP000000558">
    <property type="component" value="Chromosome"/>
</dbReference>
<dbReference type="Proteomes" id="UP000002519">
    <property type="component" value="Chromosome"/>
</dbReference>
<dbReference type="GO" id="GO:0022627">
    <property type="term" value="C:cytosolic small ribosomal subunit"/>
    <property type="evidence" value="ECO:0007669"/>
    <property type="project" value="TreeGrafter"/>
</dbReference>
<dbReference type="GO" id="GO:0043024">
    <property type="term" value="F:ribosomal small subunit binding"/>
    <property type="evidence" value="ECO:0007669"/>
    <property type="project" value="TreeGrafter"/>
</dbReference>
<dbReference type="GO" id="GO:0045900">
    <property type="term" value="P:negative regulation of translational elongation"/>
    <property type="evidence" value="ECO:0007669"/>
    <property type="project" value="TreeGrafter"/>
</dbReference>
<dbReference type="CDD" id="cd00552">
    <property type="entry name" value="RaiA"/>
    <property type="match status" value="1"/>
</dbReference>
<dbReference type="FunFam" id="3.30.160.100:FF:000002">
    <property type="entry name" value="Ribosome-associated translation inhibitor RaiA"/>
    <property type="match status" value="1"/>
</dbReference>
<dbReference type="Gene3D" id="3.30.160.100">
    <property type="entry name" value="Ribosome hibernation promotion factor-like"/>
    <property type="match status" value="1"/>
</dbReference>
<dbReference type="InterPro" id="IPR050574">
    <property type="entry name" value="HPF/YfiA_ribosome-assoc"/>
</dbReference>
<dbReference type="InterPro" id="IPR036567">
    <property type="entry name" value="RHF-like"/>
</dbReference>
<dbReference type="InterPro" id="IPR003489">
    <property type="entry name" value="RHF/RaiA"/>
</dbReference>
<dbReference type="NCBIfam" id="NF007654">
    <property type="entry name" value="PRK10324.1"/>
    <property type="match status" value="1"/>
</dbReference>
<dbReference type="NCBIfam" id="TIGR00741">
    <property type="entry name" value="yfiA"/>
    <property type="match status" value="1"/>
</dbReference>
<dbReference type="PANTHER" id="PTHR33231">
    <property type="entry name" value="30S RIBOSOMAL PROTEIN"/>
    <property type="match status" value="1"/>
</dbReference>
<dbReference type="PANTHER" id="PTHR33231:SF3">
    <property type="entry name" value="RIBOSOME-ASSOCIATED INHIBITOR A"/>
    <property type="match status" value="1"/>
</dbReference>
<dbReference type="Pfam" id="PF02482">
    <property type="entry name" value="Ribosomal_S30AE"/>
    <property type="match status" value="1"/>
</dbReference>
<dbReference type="SUPFAM" id="SSF69754">
    <property type="entry name" value="Ribosome binding protein Y (YfiA homologue)"/>
    <property type="match status" value="1"/>
</dbReference>
<organism>
    <name type="scientific">Escherichia coli O157:H7</name>
    <dbReference type="NCBI Taxonomy" id="83334"/>
    <lineage>
        <taxon>Bacteria</taxon>
        <taxon>Pseudomonadati</taxon>
        <taxon>Pseudomonadota</taxon>
        <taxon>Gammaproteobacteria</taxon>
        <taxon>Enterobacterales</taxon>
        <taxon>Enterobacteriaceae</taxon>
        <taxon>Escherichia</taxon>
    </lineage>
</organism>
<protein>
    <recommendedName>
        <fullName evidence="4">Ribosome-associated factor Y</fullName>
        <shortName>pY</shortName>
    </recommendedName>
    <alternativeName>
        <fullName>Ribosome associated inhibitor A</fullName>
    </alternativeName>
</protein>
<gene>
    <name evidence="4" type="primary">yfiA</name>
    <name type="synonym">raiA</name>
    <name type="ordered locus">Z3890</name>
    <name type="ordered locus">ECs3460</name>
</gene>
<keyword id="KW-0007">Acetylation</keyword>
<keyword id="KW-1185">Reference proteome</keyword>
<keyword id="KW-0346">Stress response</keyword>
<keyword id="KW-0810">Translation regulation</keyword>
<comment type="function">
    <text evidence="2">During stationary phase, prevents 70S dimer formation, probably in order to regulate translation efficiency during transition between the exponential and the stationary phases. In addition, during environmental stress such as cold shock or excessive cell density at stationary phase, stabilizes the 70S ribosome against dissociation, inhibits translation initiation and increase translation accuracy. When normal growth conditions are restored, is quickly released from the ribosome (By similarity).</text>
</comment>
<comment type="subunit">
    <text evidence="2">Associates mainly with 70S ribosomes.</text>
</comment>
<comment type="induction">
    <text evidence="2">By environmental stress and during stationary phase.</text>
</comment>
<comment type="similarity">
    <text evidence="4">Belongs to the HPF/YfiA ribosome-associated protein family. YfiA subfamily.</text>
</comment>
<accession>P0AD51</accession>
<accession>P11285</accession>
<feature type="initiator methionine" description="Removed" evidence="1">
    <location>
        <position position="1"/>
    </location>
</feature>
<feature type="chain" id="PRO_0000169262" description="Ribosome-associated factor Y">
    <location>
        <begin position="2"/>
        <end position="113"/>
    </location>
</feature>
<feature type="region of interest" description="Disordered" evidence="3">
    <location>
        <begin position="91"/>
        <end position="113"/>
    </location>
</feature>
<feature type="modified residue" description="N6-acetyllysine" evidence="1">
    <location>
        <position position="66"/>
    </location>
</feature>
<reference key="1">
    <citation type="journal article" date="2001" name="Nature">
        <title>Genome sequence of enterohaemorrhagic Escherichia coli O157:H7.</title>
        <authorList>
            <person name="Perna N.T."/>
            <person name="Plunkett G. III"/>
            <person name="Burland V."/>
            <person name="Mau B."/>
            <person name="Glasner J.D."/>
            <person name="Rose D.J."/>
            <person name="Mayhew G.F."/>
            <person name="Evans P.S."/>
            <person name="Gregor J."/>
            <person name="Kirkpatrick H.A."/>
            <person name="Posfai G."/>
            <person name="Hackett J."/>
            <person name="Klink S."/>
            <person name="Boutin A."/>
            <person name="Shao Y."/>
            <person name="Miller L."/>
            <person name="Grotbeck E.J."/>
            <person name="Davis N.W."/>
            <person name="Lim A."/>
            <person name="Dimalanta E.T."/>
            <person name="Potamousis K."/>
            <person name="Apodaca J."/>
            <person name="Anantharaman T.S."/>
            <person name="Lin J."/>
            <person name="Yen G."/>
            <person name="Schwartz D.C."/>
            <person name="Welch R.A."/>
            <person name="Blattner F.R."/>
        </authorList>
    </citation>
    <scope>NUCLEOTIDE SEQUENCE [LARGE SCALE GENOMIC DNA]</scope>
    <source>
        <strain>O157:H7 / EDL933 / ATCC 700927 / EHEC</strain>
    </source>
</reference>
<reference key="2">
    <citation type="journal article" date="2001" name="DNA Res.">
        <title>Complete genome sequence of enterohemorrhagic Escherichia coli O157:H7 and genomic comparison with a laboratory strain K-12.</title>
        <authorList>
            <person name="Hayashi T."/>
            <person name="Makino K."/>
            <person name="Ohnishi M."/>
            <person name="Kurokawa K."/>
            <person name="Ishii K."/>
            <person name="Yokoyama K."/>
            <person name="Han C.-G."/>
            <person name="Ohtsubo E."/>
            <person name="Nakayama K."/>
            <person name="Murata T."/>
            <person name="Tanaka M."/>
            <person name="Tobe T."/>
            <person name="Iida T."/>
            <person name="Takami H."/>
            <person name="Honda T."/>
            <person name="Sasakawa C."/>
            <person name="Ogasawara N."/>
            <person name="Yasunaga T."/>
            <person name="Kuhara S."/>
            <person name="Shiba T."/>
            <person name="Hattori M."/>
            <person name="Shinagawa H."/>
        </authorList>
    </citation>
    <scope>NUCLEOTIDE SEQUENCE [LARGE SCALE GENOMIC DNA]</scope>
    <source>
        <strain>O157:H7 / Sakai / RIMD 0509952 / EHEC</strain>
    </source>
</reference>
<proteinExistence type="inferred from homology"/>
<evidence type="ECO:0000250" key="1"/>
<evidence type="ECO:0000250" key="2">
    <source>
        <dbReference type="UniProtKB" id="P0AD49"/>
    </source>
</evidence>
<evidence type="ECO:0000256" key="3">
    <source>
        <dbReference type="SAM" id="MobiDB-lite"/>
    </source>
</evidence>
<evidence type="ECO:0000305" key="4"/>
<sequence>MTMNITSKQMEITPAIRQHVADRLAKLEKWQTHLINPHIILSKEPQGFVADATINTPNGVLVASGKHEDMYTAINELINKLERQLNKLQHKGEARRAATSVKDANFVEEVEEE</sequence>